<protein>
    <recommendedName>
        <fullName evidence="2">Inosine triphosphate pyrophosphatase</fullName>
        <shortName evidence="2">ITPase</shortName>
        <shortName evidence="2">Inosine triphosphatase</shortName>
        <ecNumber evidence="2 3 4">3.6.1.66</ecNumber>
    </recommendedName>
    <alternativeName>
        <fullName evidence="2">Non-canonical purine NTP pyrophosphatase</fullName>
    </alternativeName>
    <alternativeName>
        <fullName evidence="2">Non-standard purine NTP pyrophosphatase</fullName>
    </alternativeName>
    <alternativeName>
        <fullName evidence="2">Nucleoside-triphosphate diphosphatase</fullName>
    </alternativeName>
    <alternativeName>
        <fullName evidence="2">Nucleoside-triphosphate pyrophosphatase</fullName>
        <shortName evidence="2">NTPase</shortName>
    </alternativeName>
    <alternativeName>
        <fullName evidence="2">XTP/dITP diphosphatase</fullName>
    </alternativeName>
</protein>
<feature type="initiator methionine" description="Removed" evidence="2">
    <location>
        <position position="1"/>
    </location>
</feature>
<feature type="chain" id="PRO_0000178281" description="Inosine triphosphate pyrophosphatase">
    <location>
        <begin position="2"/>
        <end position="198"/>
    </location>
</feature>
<feature type="binding site" evidence="2">
    <location>
        <begin position="14"/>
        <end position="19"/>
    </location>
    <ligand>
        <name>ITP</name>
        <dbReference type="ChEBI" id="CHEBI:61402"/>
    </ligand>
</feature>
<feature type="binding site" evidence="2">
    <location>
        <position position="44"/>
    </location>
    <ligand>
        <name>Mg(2+)</name>
        <dbReference type="ChEBI" id="CHEBI:18420"/>
    </ligand>
</feature>
<feature type="binding site" evidence="2">
    <location>
        <position position="56"/>
    </location>
    <ligand>
        <name>ITP</name>
        <dbReference type="ChEBI" id="CHEBI:61402"/>
    </ligand>
</feature>
<feature type="binding site" evidence="2">
    <location>
        <begin position="72"/>
        <end position="73"/>
    </location>
    <ligand>
        <name>ITP</name>
        <dbReference type="ChEBI" id="CHEBI:61402"/>
    </ligand>
</feature>
<feature type="binding site" evidence="2">
    <location>
        <position position="89"/>
    </location>
    <ligand>
        <name>ITP</name>
        <dbReference type="ChEBI" id="CHEBI:61402"/>
    </ligand>
</feature>
<feature type="binding site" evidence="2">
    <location>
        <begin position="149"/>
        <end position="152"/>
    </location>
    <ligand>
        <name>ITP</name>
        <dbReference type="ChEBI" id="CHEBI:61402"/>
    </ligand>
</feature>
<feature type="binding site" evidence="2">
    <location>
        <position position="172"/>
    </location>
    <ligand>
        <name>ITP</name>
        <dbReference type="ChEBI" id="CHEBI:61402"/>
    </ligand>
</feature>
<feature type="binding site" evidence="2">
    <location>
        <begin position="177"/>
        <end position="178"/>
    </location>
    <ligand>
        <name>ITP</name>
        <dbReference type="ChEBI" id="CHEBI:61402"/>
    </ligand>
</feature>
<feature type="modified residue" description="N-acetylalanine" evidence="1 2">
    <location>
        <position position="2"/>
    </location>
</feature>
<feature type="modified residue" description="Phosphoserine" evidence="8">
    <location>
        <position position="146"/>
    </location>
</feature>
<feature type="sequence conflict" description="In Ref. 2; BAB25571." evidence="6" ref="2">
    <original>P</original>
    <variation>Q</variation>
    <location>
        <position position="32"/>
    </location>
</feature>
<feature type="sequence conflict" description="In Ref. 2; BAB25571." evidence="6" ref="2">
    <original>I</original>
    <variation>M</variation>
    <location>
        <position position="54"/>
    </location>
</feature>
<comment type="function">
    <text evidence="2 3 4 5">Pyrophosphatase that hydrolyzes the non-canonical purine nucleotides inosine triphosphate (ITP), deoxyinosine triphosphate (dITP) as well as 2'-deoxy-N-6-hydroxylaminopurine triphosphate (dHAPTP) and xanthosine 5'-triphosphate (XTP) to their respective monophosphate derivatives. The enzyme does not distinguish between the deoxy- and ribose forms. Probably excludes non-canonical purines from RNA and DNA precursor pools, thus preventing their incorporation into RNA and DNA and avoiding chromosomal lesions.</text>
</comment>
<comment type="catalytic activity">
    <reaction evidence="2 4">
        <text>ITP + H2O = IMP + diphosphate + H(+)</text>
        <dbReference type="Rhea" id="RHEA:29399"/>
        <dbReference type="ChEBI" id="CHEBI:15377"/>
        <dbReference type="ChEBI" id="CHEBI:15378"/>
        <dbReference type="ChEBI" id="CHEBI:33019"/>
        <dbReference type="ChEBI" id="CHEBI:58053"/>
        <dbReference type="ChEBI" id="CHEBI:61402"/>
        <dbReference type="EC" id="3.6.1.66"/>
    </reaction>
    <physiologicalReaction direction="left-to-right" evidence="2 4">
        <dbReference type="Rhea" id="RHEA:29400"/>
    </physiologicalReaction>
</comment>
<comment type="catalytic activity">
    <reaction evidence="2 3">
        <text>dITP + H2O = dIMP + diphosphate + H(+)</text>
        <dbReference type="Rhea" id="RHEA:28342"/>
        <dbReference type="ChEBI" id="CHEBI:15377"/>
        <dbReference type="ChEBI" id="CHEBI:15378"/>
        <dbReference type="ChEBI" id="CHEBI:33019"/>
        <dbReference type="ChEBI" id="CHEBI:61194"/>
        <dbReference type="ChEBI" id="CHEBI:61382"/>
        <dbReference type="EC" id="3.6.1.66"/>
    </reaction>
    <physiologicalReaction direction="left-to-right" evidence="2 7">
        <dbReference type="Rhea" id="RHEA:28343"/>
    </physiologicalReaction>
</comment>
<comment type="catalytic activity">
    <reaction evidence="2">
        <text>XTP + H2O = XMP + diphosphate + H(+)</text>
        <dbReference type="Rhea" id="RHEA:28610"/>
        <dbReference type="ChEBI" id="CHEBI:15377"/>
        <dbReference type="ChEBI" id="CHEBI:15378"/>
        <dbReference type="ChEBI" id="CHEBI:33019"/>
        <dbReference type="ChEBI" id="CHEBI:57464"/>
        <dbReference type="ChEBI" id="CHEBI:61314"/>
        <dbReference type="EC" id="3.6.1.66"/>
    </reaction>
    <physiologicalReaction direction="left-to-right" evidence="2">
        <dbReference type="Rhea" id="RHEA:28611"/>
    </physiologicalReaction>
</comment>
<comment type="catalytic activity">
    <reaction evidence="3">
        <text>N(6)-hydroxy-dATP + H2O = N(6)-hydroxy-dAMP + diphosphate + H(+)</text>
        <dbReference type="Rhea" id="RHEA:83971"/>
        <dbReference type="ChEBI" id="CHEBI:15377"/>
        <dbReference type="ChEBI" id="CHEBI:15378"/>
        <dbReference type="ChEBI" id="CHEBI:33019"/>
        <dbReference type="ChEBI" id="CHEBI:233529"/>
        <dbReference type="ChEBI" id="CHEBI:233530"/>
    </reaction>
    <physiologicalReaction direction="left-to-right" evidence="7">
        <dbReference type="Rhea" id="RHEA:83972"/>
    </physiologicalReaction>
</comment>
<comment type="cofactor">
    <cofactor evidence="2">
        <name>Mg(2+)</name>
        <dbReference type="ChEBI" id="CHEBI:18420"/>
    </cofactor>
    <cofactor evidence="2">
        <name>Mn(2+)</name>
        <dbReference type="ChEBI" id="CHEBI:29035"/>
    </cofactor>
    <text evidence="2">Binds 1 divalent metal cation per subunit; can use either Mg(2+) or Mn(2+).</text>
</comment>
<comment type="biophysicochemical properties">
    <kinetics>
        <KM evidence="3">24.9 uM for dITP</KM>
        <KM evidence="3">38.4 uM for dHAPTP</KM>
        <KM evidence="3">667 uM for dGTP</KM>
        <text evidence="3">kcat is 84 sec(-1) with dITP as substrate (PubMed:17090528). kcat is 115 sec(-1) with dHAPTP as substrate (PubMed:17090528). kcat is 12.4 sec(-1) with dGTP as substrate (PubMed:17090528).</text>
    </kinetics>
</comment>
<comment type="subunit">
    <text evidence="2">Homodimer.</text>
</comment>
<comment type="subcellular location">
    <subcellularLocation>
        <location evidence="2">Cytoplasm</location>
    </subcellularLocation>
</comment>
<comment type="disruption phenotype">
    <text evidence="4 5">Pups die about 2 weeks after birth with growth retardation and heart failure. Accumulates ITP in erythrocytes. Accumulates inosine in RNA and deoxyinosine in DNA.</text>
</comment>
<comment type="similarity">
    <text evidence="2">Belongs to the HAM1 NTPase family.</text>
</comment>
<reference key="1">
    <citation type="journal article" date="2005" name="Science">
        <title>The transcriptional landscape of the mammalian genome.</title>
        <authorList>
            <person name="Carninci P."/>
            <person name="Kasukawa T."/>
            <person name="Katayama S."/>
            <person name="Gough J."/>
            <person name="Frith M.C."/>
            <person name="Maeda N."/>
            <person name="Oyama R."/>
            <person name="Ravasi T."/>
            <person name="Lenhard B."/>
            <person name="Wells C."/>
            <person name="Kodzius R."/>
            <person name="Shimokawa K."/>
            <person name="Bajic V.B."/>
            <person name="Brenner S.E."/>
            <person name="Batalov S."/>
            <person name="Forrest A.R."/>
            <person name="Zavolan M."/>
            <person name="Davis M.J."/>
            <person name="Wilming L.G."/>
            <person name="Aidinis V."/>
            <person name="Allen J.E."/>
            <person name="Ambesi-Impiombato A."/>
            <person name="Apweiler R."/>
            <person name="Aturaliya R.N."/>
            <person name="Bailey T.L."/>
            <person name="Bansal M."/>
            <person name="Baxter L."/>
            <person name="Beisel K.W."/>
            <person name="Bersano T."/>
            <person name="Bono H."/>
            <person name="Chalk A.M."/>
            <person name="Chiu K.P."/>
            <person name="Choudhary V."/>
            <person name="Christoffels A."/>
            <person name="Clutterbuck D.R."/>
            <person name="Crowe M.L."/>
            <person name="Dalla E."/>
            <person name="Dalrymple B.P."/>
            <person name="de Bono B."/>
            <person name="Della Gatta G."/>
            <person name="di Bernardo D."/>
            <person name="Down T."/>
            <person name="Engstrom P."/>
            <person name="Fagiolini M."/>
            <person name="Faulkner G."/>
            <person name="Fletcher C.F."/>
            <person name="Fukushima T."/>
            <person name="Furuno M."/>
            <person name="Futaki S."/>
            <person name="Gariboldi M."/>
            <person name="Georgii-Hemming P."/>
            <person name="Gingeras T.R."/>
            <person name="Gojobori T."/>
            <person name="Green R.E."/>
            <person name="Gustincich S."/>
            <person name="Harbers M."/>
            <person name="Hayashi Y."/>
            <person name="Hensch T.K."/>
            <person name="Hirokawa N."/>
            <person name="Hill D."/>
            <person name="Huminiecki L."/>
            <person name="Iacono M."/>
            <person name="Ikeo K."/>
            <person name="Iwama A."/>
            <person name="Ishikawa T."/>
            <person name="Jakt M."/>
            <person name="Kanapin A."/>
            <person name="Katoh M."/>
            <person name="Kawasawa Y."/>
            <person name="Kelso J."/>
            <person name="Kitamura H."/>
            <person name="Kitano H."/>
            <person name="Kollias G."/>
            <person name="Krishnan S.P."/>
            <person name="Kruger A."/>
            <person name="Kummerfeld S.K."/>
            <person name="Kurochkin I.V."/>
            <person name="Lareau L.F."/>
            <person name="Lazarevic D."/>
            <person name="Lipovich L."/>
            <person name="Liu J."/>
            <person name="Liuni S."/>
            <person name="McWilliam S."/>
            <person name="Madan Babu M."/>
            <person name="Madera M."/>
            <person name="Marchionni L."/>
            <person name="Matsuda H."/>
            <person name="Matsuzawa S."/>
            <person name="Miki H."/>
            <person name="Mignone F."/>
            <person name="Miyake S."/>
            <person name="Morris K."/>
            <person name="Mottagui-Tabar S."/>
            <person name="Mulder N."/>
            <person name="Nakano N."/>
            <person name="Nakauchi H."/>
            <person name="Ng P."/>
            <person name="Nilsson R."/>
            <person name="Nishiguchi S."/>
            <person name="Nishikawa S."/>
            <person name="Nori F."/>
            <person name="Ohara O."/>
            <person name="Okazaki Y."/>
            <person name="Orlando V."/>
            <person name="Pang K.C."/>
            <person name="Pavan W.J."/>
            <person name="Pavesi G."/>
            <person name="Pesole G."/>
            <person name="Petrovsky N."/>
            <person name="Piazza S."/>
            <person name="Reed J."/>
            <person name="Reid J.F."/>
            <person name="Ring B.Z."/>
            <person name="Ringwald M."/>
            <person name="Rost B."/>
            <person name="Ruan Y."/>
            <person name="Salzberg S.L."/>
            <person name="Sandelin A."/>
            <person name="Schneider C."/>
            <person name="Schoenbach C."/>
            <person name="Sekiguchi K."/>
            <person name="Semple C.A."/>
            <person name="Seno S."/>
            <person name="Sessa L."/>
            <person name="Sheng Y."/>
            <person name="Shibata Y."/>
            <person name="Shimada H."/>
            <person name="Shimada K."/>
            <person name="Silva D."/>
            <person name="Sinclair B."/>
            <person name="Sperling S."/>
            <person name="Stupka E."/>
            <person name="Sugiura K."/>
            <person name="Sultana R."/>
            <person name="Takenaka Y."/>
            <person name="Taki K."/>
            <person name="Tammoja K."/>
            <person name="Tan S.L."/>
            <person name="Tang S."/>
            <person name="Taylor M.S."/>
            <person name="Tegner J."/>
            <person name="Teichmann S.A."/>
            <person name="Ueda H.R."/>
            <person name="van Nimwegen E."/>
            <person name="Verardo R."/>
            <person name="Wei C.L."/>
            <person name="Yagi K."/>
            <person name="Yamanishi H."/>
            <person name="Zabarovsky E."/>
            <person name="Zhu S."/>
            <person name="Zimmer A."/>
            <person name="Hide W."/>
            <person name="Bult C."/>
            <person name="Grimmond S.M."/>
            <person name="Teasdale R.D."/>
            <person name="Liu E.T."/>
            <person name="Brusic V."/>
            <person name="Quackenbush J."/>
            <person name="Wahlestedt C."/>
            <person name="Mattick J.S."/>
            <person name="Hume D.A."/>
            <person name="Kai C."/>
            <person name="Sasaki D."/>
            <person name="Tomaru Y."/>
            <person name="Fukuda S."/>
            <person name="Kanamori-Katayama M."/>
            <person name="Suzuki M."/>
            <person name="Aoki J."/>
            <person name="Arakawa T."/>
            <person name="Iida J."/>
            <person name="Imamura K."/>
            <person name="Itoh M."/>
            <person name="Kato T."/>
            <person name="Kawaji H."/>
            <person name="Kawagashira N."/>
            <person name="Kawashima T."/>
            <person name="Kojima M."/>
            <person name="Kondo S."/>
            <person name="Konno H."/>
            <person name="Nakano K."/>
            <person name="Ninomiya N."/>
            <person name="Nishio T."/>
            <person name="Okada M."/>
            <person name="Plessy C."/>
            <person name="Shibata K."/>
            <person name="Shiraki T."/>
            <person name="Suzuki S."/>
            <person name="Tagami M."/>
            <person name="Waki K."/>
            <person name="Watahiki A."/>
            <person name="Okamura-Oho Y."/>
            <person name="Suzuki H."/>
            <person name="Kawai J."/>
            <person name="Hayashizaki Y."/>
        </authorList>
    </citation>
    <scope>NUCLEOTIDE SEQUENCE [LARGE SCALE MRNA]</scope>
    <source>
        <strain>C57BL/6J</strain>
        <tissue>Small intestine</tissue>
    </source>
</reference>
<reference key="2">
    <citation type="journal article" date="2004" name="Genome Res.">
        <title>The status, quality, and expansion of the NIH full-length cDNA project: the Mammalian Gene Collection (MGC).</title>
        <authorList>
            <consortium name="The MGC Project Team"/>
        </authorList>
    </citation>
    <scope>NUCLEOTIDE SEQUENCE [LARGE SCALE MRNA]</scope>
    <source>
        <strain>C57BL/6J</strain>
        <tissue>Eye</tissue>
    </source>
</reference>
<reference key="3">
    <citation type="journal article" date="2007" name="J. Biol. Chem.">
        <title>Substrate specificity of RdgB protein, a deoxyribonucleoside triphosphate pyrophosphohydrolase.</title>
        <authorList>
            <person name="Burgis N.E."/>
            <person name="Cunningham R.P."/>
        </authorList>
    </citation>
    <scope>SUBSTRATE SPECIFICITY</scope>
    <scope>FUNCTION</scope>
    <scope>CATALYTIC ACTIVITY</scope>
    <scope>BIOPHYSICOCHEMICAL PROPERTIES</scope>
</reference>
<reference key="4">
    <citation type="journal article" date="2010" name="Cell">
        <title>A tissue-specific atlas of mouse protein phosphorylation and expression.</title>
        <authorList>
            <person name="Huttlin E.L."/>
            <person name="Jedrychowski M.P."/>
            <person name="Elias J.E."/>
            <person name="Goswami T."/>
            <person name="Rad R."/>
            <person name="Beausoleil S.A."/>
            <person name="Villen J."/>
            <person name="Haas W."/>
            <person name="Sowa M.E."/>
            <person name="Gygi S.P."/>
        </authorList>
    </citation>
    <scope>PHOSPHORYLATION [LARGE SCALE ANALYSIS] AT SER-146</scope>
    <scope>IDENTIFICATION BY MASS SPECTROMETRY [LARGE SCALE ANALYSIS]</scope>
    <source>
        <tissue>Brain</tissue>
        <tissue>Brown adipose tissue</tissue>
        <tissue>Heart</tissue>
        <tissue>Kidney</tissue>
        <tissue>Liver</tissue>
        <tissue>Lung</tissue>
        <tissue>Pancreas</tissue>
        <tissue>Spleen</tissue>
        <tissue>Testis</tissue>
    </source>
</reference>
<reference key="5">
    <citation type="journal article" date="2010" name="Mutat. Res.">
        <title>ITPA protein, an enzyme that eliminates deaminated purine nucleoside triphosphates in cells.</title>
        <authorList>
            <person name="Sakumi K."/>
            <person name="Abolhassani N."/>
            <person name="Behmanesh M."/>
            <person name="Iyama T."/>
            <person name="Tsuchimoto D."/>
            <person name="Nakabeppu Y."/>
        </authorList>
    </citation>
    <scope>FUNCTION</scope>
    <scope>DISRUPTION PHENOTYPE</scope>
</reference>
<reference key="6">
    <citation type="journal article" date="2010" name="Nucleic Acids Res.">
        <title>NUDT16 and ITPA play a dual protective role in maintaining chromosome stability and cell growth by eliminating dIDP/IDP and dITP/ITP from nucleotide pools in mammals.</title>
        <authorList>
            <person name="Abolhassani N."/>
            <person name="Iyama T."/>
            <person name="Tsuchimoto D."/>
            <person name="Sakumi K."/>
            <person name="Ohno M."/>
            <person name="Behmanesh M."/>
            <person name="Nakabeppu Y."/>
        </authorList>
    </citation>
    <scope>FUNCTION</scope>
    <scope>CATALYTIC ACTIVITY</scope>
    <scope>DISRUPTION PHENOTYPE</scope>
</reference>
<name>ITPA_MOUSE</name>
<organism>
    <name type="scientific">Mus musculus</name>
    <name type="common">Mouse</name>
    <dbReference type="NCBI Taxonomy" id="10090"/>
    <lineage>
        <taxon>Eukaryota</taxon>
        <taxon>Metazoa</taxon>
        <taxon>Chordata</taxon>
        <taxon>Craniata</taxon>
        <taxon>Vertebrata</taxon>
        <taxon>Euteleostomi</taxon>
        <taxon>Mammalia</taxon>
        <taxon>Eutheria</taxon>
        <taxon>Euarchontoglires</taxon>
        <taxon>Glires</taxon>
        <taxon>Rodentia</taxon>
        <taxon>Myomorpha</taxon>
        <taxon>Muroidea</taxon>
        <taxon>Muridae</taxon>
        <taxon>Murinae</taxon>
        <taxon>Mus</taxon>
        <taxon>Mus</taxon>
    </lineage>
</organism>
<dbReference type="EC" id="3.6.1.66" evidence="2 3 4"/>
<dbReference type="EMBL" id="AK008279">
    <property type="protein sequence ID" value="BAB25571.1"/>
    <property type="molecule type" value="mRNA"/>
</dbReference>
<dbReference type="EMBL" id="BC026508">
    <property type="protein sequence ID" value="AAH26508.1"/>
    <property type="molecule type" value="mRNA"/>
</dbReference>
<dbReference type="CCDS" id="CCDS16748.1"/>
<dbReference type="RefSeq" id="NP_080198.2">
    <property type="nucleotide sequence ID" value="NM_025922.2"/>
</dbReference>
<dbReference type="RefSeq" id="XP_017171220.1">
    <property type="nucleotide sequence ID" value="XM_017315731.3"/>
</dbReference>
<dbReference type="SMR" id="Q9D892"/>
<dbReference type="BioGRID" id="200846">
    <property type="interactions" value="1"/>
</dbReference>
<dbReference type="FunCoup" id="Q9D892">
    <property type="interactions" value="3128"/>
</dbReference>
<dbReference type="IntAct" id="Q9D892">
    <property type="interactions" value="1"/>
</dbReference>
<dbReference type="STRING" id="10090.ENSMUSP00000099482"/>
<dbReference type="GlyGen" id="Q9D892">
    <property type="glycosylation" value="1 site, 1 O-linked glycan (1 site)"/>
</dbReference>
<dbReference type="iPTMnet" id="Q9D892"/>
<dbReference type="PhosphoSitePlus" id="Q9D892"/>
<dbReference type="SwissPalm" id="Q9D892"/>
<dbReference type="REPRODUCTION-2DPAGE" id="Q9D892"/>
<dbReference type="CPTAC" id="non-CPTAC-3829"/>
<dbReference type="jPOST" id="Q9D892"/>
<dbReference type="PaxDb" id="10090-ENSMUSP00000099482"/>
<dbReference type="ProteomicsDB" id="269412"/>
<dbReference type="Pumba" id="Q9D892"/>
<dbReference type="Antibodypedia" id="7322">
    <property type="antibodies" value="291 antibodies from 32 providers"/>
</dbReference>
<dbReference type="DNASU" id="16434"/>
<dbReference type="Ensembl" id="ENSMUST00000103193.5">
    <property type="protein sequence ID" value="ENSMUSP00000099482.5"/>
    <property type="gene ID" value="ENSMUSG00000074797.12"/>
</dbReference>
<dbReference type="GeneID" id="16434"/>
<dbReference type="KEGG" id="mmu:16434"/>
<dbReference type="UCSC" id="uc008mju.1">
    <property type="organism name" value="mouse"/>
</dbReference>
<dbReference type="AGR" id="MGI:96622"/>
<dbReference type="CTD" id="3704"/>
<dbReference type="MGI" id="MGI:96622">
    <property type="gene designation" value="Itpa"/>
</dbReference>
<dbReference type="VEuPathDB" id="HostDB:ENSMUSG00000074797"/>
<dbReference type="eggNOG" id="KOG3222">
    <property type="taxonomic scope" value="Eukaryota"/>
</dbReference>
<dbReference type="GeneTree" id="ENSGT00390000015399"/>
<dbReference type="HOGENOM" id="CLU_082080_1_1_1"/>
<dbReference type="InParanoid" id="Q9D892"/>
<dbReference type="OMA" id="YDPIFQP"/>
<dbReference type="OrthoDB" id="6288734at2759"/>
<dbReference type="PhylomeDB" id="Q9D892"/>
<dbReference type="TreeFam" id="TF105614"/>
<dbReference type="Reactome" id="R-MMU-74259">
    <property type="pathway name" value="Purine catabolism"/>
</dbReference>
<dbReference type="Reactome" id="R-MMU-9755088">
    <property type="pathway name" value="Ribavirin ADME"/>
</dbReference>
<dbReference type="BioGRID-ORCS" id="16434">
    <property type="hits" value="4 hits in 78 CRISPR screens"/>
</dbReference>
<dbReference type="ChiTaRS" id="Itpa">
    <property type="organism name" value="mouse"/>
</dbReference>
<dbReference type="PRO" id="PR:Q9D892"/>
<dbReference type="Proteomes" id="UP000000589">
    <property type="component" value="Chromosome 2"/>
</dbReference>
<dbReference type="RNAct" id="Q9D892">
    <property type="molecule type" value="protein"/>
</dbReference>
<dbReference type="Bgee" id="ENSMUSG00000074797">
    <property type="expression patterns" value="Expressed in ectoplacental cone and 278 other cell types or tissues"/>
</dbReference>
<dbReference type="ExpressionAtlas" id="Q9D892">
    <property type="expression patterns" value="baseline and differential"/>
</dbReference>
<dbReference type="GO" id="GO:0005829">
    <property type="term" value="C:cytosol"/>
    <property type="evidence" value="ECO:0007669"/>
    <property type="project" value="Ensembl"/>
</dbReference>
<dbReference type="GO" id="GO:0005654">
    <property type="term" value="C:nucleoplasm"/>
    <property type="evidence" value="ECO:0007669"/>
    <property type="project" value="Ensembl"/>
</dbReference>
<dbReference type="GO" id="GO:0035870">
    <property type="term" value="F:dITP diphosphatase activity"/>
    <property type="evidence" value="ECO:0000315"/>
    <property type="project" value="MGI"/>
</dbReference>
<dbReference type="GO" id="GO:0042802">
    <property type="term" value="F:identical protein binding"/>
    <property type="evidence" value="ECO:0007669"/>
    <property type="project" value="Ensembl"/>
</dbReference>
<dbReference type="GO" id="GO:0036220">
    <property type="term" value="F:ITP diphosphatase activity"/>
    <property type="evidence" value="ECO:0007669"/>
    <property type="project" value="RHEA"/>
</dbReference>
<dbReference type="GO" id="GO:0046872">
    <property type="term" value="F:metal ion binding"/>
    <property type="evidence" value="ECO:0007669"/>
    <property type="project" value="UniProtKB-KW"/>
</dbReference>
<dbReference type="GO" id="GO:0047429">
    <property type="term" value="F:nucleoside triphosphate diphosphatase activity"/>
    <property type="evidence" value="ECO:0000314"/>
    <property type="project" value="MGI"/>
</dbReference>
<dbReference type="GO" id="GO:0000166">
    <property type="term" value="F:nucleotide binding"/>
    <property type="evidence" value="ECO:0007669"/>
    <property type="project" value="UniProtKB-KW"/>
</dbReference>
<dbReference type="GO" id="GO:0036222">
    <property type="term" value="F:XTP diphosphatase activity"/>
    <property type="evidence" value="ECO:0007669"/>
    <property type="project" value="RHEA"/>
</dbReference>
<dbReference type="GO" id="GO:0051276">
    <property type="term" value="P:chromosome organization"/>
    <property type="evidence" value="ECO:0000315"/>
    <property type="project" value="MGI"/>
</dbReference>
<dbReference type="GO" id="GO:0009204">
    <property type="term" value="P:deoxyribonucleoside triphosphate catabolic process"/>
    <property type="evidence" value="ECO:0007669"/>
    <property type="project" value="UniProtKB-UniRule"/>
</dbReference>
<dbReference type="GO" id="GO:0006193">
    <property type="term" value="P:ITP catabolic process"/>
    <property type="evidence" value="ECO:0000315"/>
    <property type="project" value="MGI"/>
</dbReference>
<dbReference type="CDD" id="cd00515">
    <property type="entry name" value="HAM1"/>
    <property type="match status" value="1"/>
</dbReference>
<dbReference type="FunFam" id="3.90.950.10:FF:000003">
    <property type="entry name" value="Inosine triphosphate pyrophosphatase"/>
    <property type="match status" value="1"/>
</dbReference>
<dbReference type="Gene3D" id="3.90.950.10">
    <property type="match status" value="1"/>
</dbReference>
<dbReference type="HAMAP" id="MF_03148">
    <property type="entry name" value="HAM1_NTPase"/>
    <property type="match status" value="1"/>
</dbReference>
<dbReference type="InterPro" id="IPR027502">
    <property type="entry name" value="ITPase"/>
</dbReference>
<dbReference type="InterPro" id="IPR029001">
    <property type="entry name" value="ITPase-like_fam"/>
</dbReference>
<dbReference type="InterPro" id="IPR002637">
    <property type="entry name" value="RdgB/HAM1"/>
</dbReference>
<dbReference type="NCBIfam" id="TIGR00042">
    <property type="entry name" value="RdgB/HAM1 family non-canonical purine NTP pyrophosphatase"/>
    <property type="match status" value="1"/>
</dbReference>
<dbReference type="PANTHER" id="PTHR11067:SF9">
    <property type="entry name" value="INOSINE TRIPHOSPHATE PYROPHOSPHATASE"/>
    <property type="match status" value="1"/>
</dbReference>
<dbReference type="PANTHER" id="PTHR11067">
    <property type="entry name" value="INOSINE TRIPHOSPHATE PYROPHOSPHATASE/HAM1 PROTEIN"/>
    <property type="match status" value="1"/>
</dbReference>
<dbReference type="Pfam" id="PF01725">
    <property type="entry name" value="Ham1p_like"/>
    <property type="match status" value="1"/>
</dbReference>
<dbReference type="SUPFAM" id="SSF52972">
    <property type="entry name" value="ITPase-like"/>
    <property type="match status" value="1"/>
</dbReference>
<sequence length="198" mass="21897">MAASLVGKKIVFVTGNAKKLEEVIQILGDNFPCTLEAQKIDLPEYQGEPDEISIQKCREAARQVQGPVLVEDTCLCFNALGGLPGPYIKWFLQKLKPEGLHQLLAGFEDKSAYALCTFALSTGDPSQPVLLFRGQTSGQIVMPRGSRDFGWDPCFQPDGYEQTYAEMPKSEKNTISHRFRALHKLQEYFSVAAGAGDH</sequence>
<proteinExistence type="evidence at protein level"/>
<gene>
    <name type="primary">Itpa</name>
</gene>
<evidence type="ECO:0000250" key="1">
    <source>
        <dbReference type="UniProtKB" id="Q9BY32"/>
    </source>
</evidence>
<evidence type="ECO:0000255" key="2">
    <source>
        <dbReference type="HAMAP-Rule" id="MF_03148"/>
    </source>
</evidence>
<evidence type="ECO:0000269" key="3">
    <source>
    </source>
</evidence>
<evidence type="ECO:0000269" key="4">
    <source>
    </source>
</evidence>
<evidence type="ECO:0000269" key="5">
    <source>
    </source>
</evidence>
<evidence type="ECO:0000305" key="6"/>
<evidence type="ECO:0000305" key="7">
    <source>
    </source>
</evidence>
<evidence type="ECO:0007744" key="8">
    <source>
    </source>
</evidence>
<keyword id="KW-0007">Acetylation</keyword>
<keyword id="KW-0963">Cytoplasm</keyword>
<keyword id="KW-0378">Hydrolase</keyword>
<keyword id="KW-0460">Magnesium</keyword>
<keyword id="KW-0464">Manganese</keyword>
<keyword id="KW-0479">Metal-binding</keyword>
<keyword id="KW-0546">Nucleotide metabolism</keyword>
<keyword id="KW-0547">Nucleotide-binding</keyword>
<keyword id="KW-0597">Phosphoprotein</keyword>
<keyword id="KW-1185">Reference proteome</keyword>
<accession>Q9D892</accession>
<accession>Q8R0Q8</accession>